<gene>
    <name type="primary">HTA1</name>
    <name type="ORF">PGUG_00619</name>
</gene>
<proteinExistence type="inferred from homology"/>
<dbReference type="EMBL" id="CH408155">
    <property type="protein sequence ID" value="EDK36521.1"/>
    <property type="molecule type" value="Genomic_DNA"/>
</dbReference>
<dbReference type="RefSeq" id="XP_001487242.1">
    <property type="nucleotide sequence ID" value="XM_001487192.1"/>
</dbReference>
<dbReference type="SMR" id="A5DBG4"/>
<dbReference type="FunCoup" id="A5DBG4">
    <property type="interactions" value="1093"/>
</dbReference>
<dbReference type="STRING" id="294746.A5DBG4"/>
<dbReference type="GeneID" id="5128823"/>
<dbReference type="KEGG" id="pgu:PGUG_00619"/>
<dbReference type="VEuPathDB" id="FungiDB:PGUG_00619"/>
<dbReference type="eggNOG" id="KOG1756">
    <property type="taxonomic scope" value="Eukaryota"/>
</dbReference>
<dbReference type="HOGENOM" id="CLU_062828_3_1_1"/>
<dbReference type="InParanoid" id="A5DBG4"/>
<dbReference type="OMA" id="YWARRTA"/>
<dbReference type="OrthoDB" id="9421954at2759"/>
<dbReference type="Proteomes" id="UP000001997">
    <property type="component" value="Unassembled WGS sequence"/>
</dbReference>
<dbReference type="GO" id="GO:0000786">
    <property type="term" value="C:nucleosome"/>
    <property type="evidence" value="ECO:0007669"/>
    <property type="project" value="UniProtKB-KW"/>
</dbReference>
<dbReference type="GO" id="GO:0005634">
    <property type="term" value="C:nucleus"/>
    <property type="evidence" value="ECO:0007669"/>
    <property type="project" value="UniProtKB-SubCell"/>
</dbReference>
<dbReference type="GO" id="GO:0003677">
    <property type="term" value="F:DNA binding"/>
    <property type="evidence" value="ECO:0007669"/>
    <property type="project" value="UniProtKB-KW"/>
</dbReference>
<dbReference type="GO" id="GO:0046982">
    <property type="term" value="F:protein heterodimerization activity"/>
    <property type="evidence" value="ECO:0007669"/>
    <property type="project" value="InterPro"/>
</dbReference>
<dbReference type="GO" id="GO:0030527">
    <property type="term" value="F:structural constituent of chromatin"/>
    <property type="evidence" value="ECO:0007669"/>
    <property type="project" value="InterPro"/>
</dbReference>
<dbReference type="GO" id="GO:0006281">
    <property type="term" value="P:DNA repair"/>
    <property type="evidence" value="ECO:0007669"/>
    <property type="project" value="UniProtKB-KW"/>
</dbReference>
<dbReference type="CDD" id="cd00074">
    <property type="entry name" value="HFD_H2A"/>
    <property type="match status" value="1"/>
</dbReference>
<dbReference type="FunFam" id="1.10.20.10:FF:000008">
    <property type="entry name" value="Histone H2A"/>
    <property type="match status" value="1"/>
</dbReference>
<dbReference type="Gene3D" id="1.10.20.10">
    <property type="entry name" value="Histone, subunit A"/>
    <property type="match status" value="1"/>
</dbReference>
<dbReference type="InterPro" id="IPR009072">
    <property type="entry name" value="Histone-fold"/>
</dbReference>
<dbReference type="InterPro" id="IPR002119">
    <property type="entry name" value="Histone_H2A"/>
</dbReference>
<dbReference type="InterPro" id="IPR007125">
    <property type="entry name" value="Histone_H2A/H2B/H3"/>
</dbReference>
<dbReference type="InterPro" id="IPR032454">
    <property type="entry name" value="Histone_H2A_C"/>
</dbReference>
<dbReference type="InterPro" id="IPR032458">
    <property type="entry name" value="Histone_H2A_CS"/>
</dbReference>
<dbReference type="PANTHER" id="PTHR23430">
    <property type="entry name" value="HISTONE H2A"/>
    <property type="match status" value="1"/>
</dbReference>
<dbReference type="Pfam" id="PF00125">
    <property type="entry name" value="Histone"/>
    <property type="match status" value="1"/>
</dbReference>
<dbReference type="Pfam" id="PF16211">
    <property type="entry name" value="Histone_H2A_C"/>
    <property type="match status" value="1"/>
</dbReference>
<dbReference type="PRINTS" id="PR00620">
    <property type="entry name" value="HISTONEH2A"/>
</dbReference>
<dbReference type="SMART" id="SM00414">
    <property type="entry name" value="H2A"/>
    <property type="match status" value="1"/>
</dbReference>
<dbReference type="SUPFAM" id="SSF47113">
    <property type="entry name" value="Histone-fold"/>
    <property type="match status" value="1"/>
</dbReference>
<dbReference type="PROSITE" id="PS00046">
    <property type="entry name" value="HISTONE_H2A"/>
    <property type="match status" value="1"/>
</dbReference>
<organism>
    <name type="scientific">Meyerozyma guilliermondii (strain ATCC 6260 / CBS 566 / DSM 6381 / JCM 1539 / NBRC 10279 / NRRL Y-324)</name>
    <name type="common">Yeast</name>
    <name type="synonym">Candida guilliermondii</name>
    <dbReference type="NCBI Taxonomy" id="294746"/>
    <lineage>
        <taxon>Eukaryota</taxon>
        <taxon>Fungi</taxon>
        <taxon>Dikarya</taxon>
        <taxon>Ascomycota</taxon>
        <taxon>Saccharomycotina</taxon>
        <taxon>Pichiomycetes</taxon>
        <taxon>Debaryomycetaceae</taxon>
        <taxon>Meyerozyma</taxon>
    </lineage>
</organism>
<protein>
    <recommendedName>
        <fullName>Histone H2A.1</fullName>
    </recommendedName>
</protein>
<sequence length="130" mass="13907">MSGGKGKVGSSEKASTSRSAKAGLTFPVGRIHRLLRKGNYAQRVGSGAPVYLTSVLEYLTAEILELAGNAARDNKKSRIIPRHLQLAIRNDEELNKLLGHVTIAQGGVLPNIHQSLLPSKKSIKGASQEL</sequence>
<reference key="1">
    <citation type="journal article" date="2009" name="Nature">
        <title>Evolution of pathogenicity and sexual reproduction in eight Candida genomes.</title>
        <authorList>
            <person name="Butler G."/>
            <person name="Rasmussen M.D."/>
            <person name="Lin M.F."/>
            <person name="Santos M.A.S."/>
            <person name="Sakthikumar S."/>
            <person name="Munro C.A."/>
            <person name="Rheinbay E."/>
            <person name="Grabherr M."/>
            <person name="Forche A."/>
            <person name="Reedy J.L."/>
            <person name="Agrafioti I."/>
            <person name="Arnaud M.B."/>
            <person name="Bates S."/>
            <person name="Brown A.J.P."/>
            <person name="Brunke S."/>
            <person name="Costanzo M.C."/>
            <person name="Fitzpatrick D.A."/>
            <person name="de Groot P.W.J."/>
            <person name="Harris D."/>
            <person name="Hoyer L.L."/>
            <person name="Hube B."/>
            <person name="Klis F.M."/>
            <person name="Kodira C."/>
            <person name="Lennard N."/>
            <person name="Logue M.E."/>
            <person name="Martin R."/>
            <person name="Neiman A.M."/>
            <person name="Nikolaou E."/>
            <person name="Quail M.A."/>
            <person name="Quinn J."/>
            <person name="Santos M.C."/>
            <person name="Schmitzberger F.F."/>
            <person name="Sherlock G."/>
            <person name="Shah P."/>
            <person name="Silverstein K.A.T."/>
            <person name="Skrzypek M.S."/>
            <person name="Soll D."/>
            <person name="Staggs R."/>
            <person name="Stansfield I."/>
            <person name="Stumpf M.P.H."/>
            <person name="Sudbery P.E."/>
            <person name="Srikantha T."/>
            <person name="Zeng Q."/>
            <person name="Berman J."/>
            <person name="Berriman M."/>
            <person name="Heitman J."/>
            <person name="Gow N.A.R."/>
            <person name="Lorenz M.C."/>
            <person name="Birren B.W."/>
            <person name="Kellis M."/>
            <person name="Cuomo C.A."/>
        </authorList>
    </citation>
    <scope>NUCLEOTIDE SEQUENCE [LARGE SCALE GENOMIC DNA]</scope>
    <source>
        <strain>ATCC 6260 / CBS 566 / DSM 6381 / JCM 1539 / NBRC 10279 / NRRL Y-324</strain>
    </source>
</reference>
<feature type="initiator methionine" description="Removed" evidence="1">
    <location>
        <position position="1"/>
    </location>
</feature>
<feature type="chain" id="PRO_0000297738" description="Histone H2A.1">
    <location>
        <begin position="2"/>
        <end position="130"/>
    </location>
</feature>
<feature type="region of interest" description="Disordered" evidence="2">
    <location>
        <begin position="1"/>
        <end position="21"/>
    </location>
</feature>
<feature type="short sequence motif" description="[ST]-Q motif">
    <location>
        <begin position="127"/>
        <end position="128"/>
    </location>
</feature>
<feature type="modified residue" description="N-acetylserine" evidence="1">
    <location>
        <position position="2"/>
    </location>
</feature>
<feature type="modified residue" description="N6-acetyllysine" evidence="1">
    <location>
        <position position="5"/>
    </location>
</feature>
<feature type="modified residue" description="N6-acetyllysine" evidence="1">
    <location>
        <position position="7"/>
    </location>
</feature>
<feature type="modified residue" description="N5-methylglutamine" evidence="1">
    <location>
        <position position="105"/>
    </location>
</feature>
<feature type="modified residue" description="Phosphoserine" evidence="1">
    <location>
        <position position="127"/>
    </location>
</feature>
<accession>A5DBG4</accession>
<keyword id="KW-0007">Acetylation</keyword>
<keyword id="KW-0158">Chromosome</keyword>
<keyword id="KW-0227">DNA damage</keyword>
<keyword id="KW-0234">DNA repair</keyword>
<keyword id="KW-0238">DNA-binding</keyword>
<keyword id="KW-0488">Methylation</keyword>
<keyword id="KW-0544">Nucleosome core</keyword>
<keyword id="KW-0539">Nucleus</keyword>
<keyword id="KW-0597">Phosphoprotein</keyword>
<keyword id="KW-1185">Reference proteome</keyword>
<name>H2A1_PICGU</name>
<evidence type="ECO:0000250" key="1"/>
<evidence type="ECO:0000256" key="2">
    <source>
        <dbReference type="SAM" id="MobiDB-lite"/>
    </source>
</evidence>
<evidence type="ECO:0000305" key="3"/>
<comment type="function">
    <text>Core component of nucleosome which plays a central role in DNA double strand break (DSB) repair. Nucleosomes wrap and compact DNA into chromatin, limiting DNA accessibility to the cellular machineries which require DNA as a template. Histones thereby play a central role in transcription regulation, DNA repair, DNA replication and chromosomal stability. DNA accessibility is regulated via a complex set of post-translational modifications of histones, also called histone code, and nucleosome remodeling.</text>
</comment>
<comment type="subunit">
    <text>The nucleosome is a histone octamer containing two molecules each of H2A, H2B, H3 and H4 assembled in one H3-H4 heterotetramer and two H2A-H2B heterodimers. The octamer wraps approximately 147 bp of DNA.</text>
</comment>
<comment type="subcellular location">
    <subcellularLocation>
        <location>Nucleus</location>
    </subcellularLocation>
    <subcellularLocation>
        <location>Chromosome</location>
    </subcellularLocation>
</comment>
<comment type="domain">
    <text>The [ST]-Q motif constitutes a recognition sequence for kinases from the PI3/PI4-kinase family.</text>
</comment>
<comment type="PTM">
    <text evidence="1">Phosphorylated to form H2AS128ph (gamma-H2A) in response to DNA double-strand breaks (DSBs) generated by exogenous genotoxic agents and by stalled replication forks. Phosphorylation is dependent on the DNA damage checkpoint kinases MEC1/ATR and TEL1/ATM, spreads on either side of a detected DSB site and may mark the surrounding chromatin for recruitment of proteins required for DNA damage signaling and repair. Gamma-H2A is removed from the DNA prior to the strand invasion-primer extension step of the repair process and subsequently dephosphorylated. Dephosphorylation is necessary for efficient recovery from the DNA damage checkpoint (By similarity).</text>
</comment>
<comment type="PTM">
    <text evidence="1">Acetylated by ESA1 to form H2AK4ac and H2AK7ac.</text>
</comment>
<comment type="miscellaneous">
    <text evidence="3">In contrast to vertebrates and insects, its C-terminus is not monoubiquitinated.</text>
</comment>
<comment type="similarity">
    <text evidence="3">Belongs to the histone H2A family.</text>
</comment>
<comment type="caution">
    <text evidence="3">To ensure consistency between histone entries, we follow the 'Brno' nomenclature for histone modifications, with positions referring to those used in the literature for the 'closest' model organism. Due to slight variations in histone sequences between organisms and to the presence of initiator methionine in UniProtKB/Swiss-Prot sequences, the actual positions of modified amino acids in the sequence generally differ. In this entry the following conventions are used: H2AK4ac = acetylated Lys-5; H2AK7ac = acetylated Lys-7; H2AS128ph = phosphorylated Ser-127.</text>
</comment>